<protein>
    <recommendedName>
        <fullName evidence="1">Large ribosomal subunit protein uL11</fullName>
    </recommendedName>
    <alternativeName>
        <fullName evidence="2">50S ribosomal protein L11</fullName>
    </alternativeName>
</protein>
<feature type="chain" id="PRO_0000104391" description="Large ribosomal subunit protein uL11">
    <location>
        <begin position="1"/>
        <end position="144"/>
    </location>
</feature>
<proteinExistence type="inferred from homology"/>
<dbReference type="EMBL" id="AB006962">
    <property type="protein sequence ID" value="BAA31985.1"/>
    <property type="molecule type" value="Genomic_DNA"/>
</dbReference>
<dbReference type="RefSeq" id="WP_003974315.1">
    <property type="nucleotide sequence ID" value="NZ_JOCE01000019.1"/>
</dbReference>
<dbReference type="SMR" id="P0A465"/>
<dbReference type="STRING" id="1935.B1H20_21555"/>
<dbReference type="GeneID" id="97463005"/>
<dbReference type="GO" id="GO:0022625">
    <property type="term" value="C:cytosolic large ribosomal subunit"/>
    <property type="evidence" value="ECO:0007669"/>
    <property type="project" value="TreeGrafter"/>
</dbReference>
<dbReference type="GO" id="GO:0070180">
    <property type="term" value="F:large ribosomal subunit rRNA binding"/>
    <property type="evidence" value="ECO:0007669"/>
    <property type="project" value="UniProtKB-UniRule"/>
</dbReference>
<dbReference type="GO" id="GO:0003735">
    <property type="term" value="F:structural constituent of ribosome"/>
    <property type="evidence" value="ECO:0007669"/>
    <property type="project" value="InterPro"/>
</dbReference>
<dbReference type="GO" id="GO:0006412">
    <property type="term" value="P:translation"/>
    <property type="evidence" value="ECO:0007669"/>
    <property type="project" value="UniProtKB-UniRule"/>
</dbReference>
<dbReference type="CDD" id="cd00349">
    <property type="entry name" value="Ribosomal_L11"/>
    <property type="match status" value="1"/>
</dbReference>
<dbReference type="FunFam" id="1.10.10.250:FF:000001">
    <property type="entry name" value="50S ribosomal protein L11"/>
    <property type="match status" value="1"/>
</dbReference>
<dbReference type="FunFam" id="3.30.1550.10:FF:000001">
    <property type="entry name" value="50S ribosomal protein L11"/>
    <property type="match status" value="1"/>
</dbReference>
<dbReference type="Gene3D" id="1.10.10.250">
    <property type="entry name" value="Ribosomal protein L11, C-terminal domain"/>
    <property type="match status" value="1"/>
</dbReference>
<dbReference type="Gene3D" id="3.30.1550.10">
    <property type="entry name" value="Ribosomal protein L11/L12, N-terminal domain"/>
    <property type="match status" value="1"/>
</dbReference>
<dbReference type="HAMAP" id="MF_00736">
    <property type="entry name" value="Ribosomal_uL11"/>
    <property type="match status" value="1"/>
</dbReference>
<dbReference type="InterPro" id="IPR000911">
    <property type="entry name" value="Ribosomal_uL11"/>
</dbReference>
<dbReference type="InterPro" id="IPR006519">
    <property type="entry name" value="Ribosomal_uL11_bac-typ"/>
</dbReference>
<dbReference type="InterPro" id="IPR020783">
    <property type="entry name" value="Ribosomal_uL11_C"/>
</dbReference>
<dbReference type="InterPro" id="IPR036769">
    <property type="entry name" value="Ribosomal_uL11_C_sf"/>
</dbReference>
<dbReference type="InterPro" id="IPR020785">
    <property type="entry name" value="Ribosomal_uL11_CS"/>
</dbReference>
<dbReference type="InterPro" id="IPR020784">
    <property type="entry name" value="Ribosomal_uL11_N"/>
</dbReference>
<dbReference type="InterPro" id="IPR036796">
    <property type="entry name" value="Ribosomal_uL11_N_sf"/>
</dbReference>
<dbReference type="NCBIfam" id="TIGR01632">
    <property type="entry name" value="L11_bact"/>
    <property type="match status" value="1"/>
</dbReference>
<dbReference type="PANTHER" id="PTHR11661">
    <property type="entry name" value="60S RIBOSOMAL PROTEIN L12"/>
    <property type="match status" value="1"/>
</dbReference>
<dbReference type="PANTHER" id="PTHR11661:SF1">
    <property type="entry name" value="LARGE RIBOSOMAL SUBUNIT PROTEIN UL11M"/>
    <property type="match status" value="1"/>
</dbReference>
<dbReference type="Pfam" id="PF00298">
    <property type="entry name" value="Ribosomal_L11"/>
    <property type="match status" value="1"/>
</dbReference>
<dbReference type="Pfam" id="PF03946">
    <property type="entry name" value="Ribosomal_L11_N"/>
    <property type="match status" value="1"/>
</dbReference>
<dbReference type="SMART" id="SM00649">
    <property type="entry name" value="RL11"/>
    <property type="match status" value="1"/>
</dbReference>
<dbReference type="SUPFAM" id="SSF54747">
    <property type="entry name" value="Ribosomal L11/L12e N-terminal domain"/>
    <property type="match status" value="1"/>
</dbReference>
<dbReference type="SUPFAM" id="SSF46906">
    <property type="entry name" value="Ribosomal protein L11, C-terminal domain"/>
    <property type="match status" value="1"/>
</dbReference>
<dbReference type="PROSITE" id="PS00359">
    <property type="entry name" value="RIBOSOMAL_L11"/>
    <property type="match status" value="1"/>
</dbReference>
<name>RL11_STRVN</name>
<organism>
    <name type="scientific">Streptomyces violaceoruber</name>
    <dbReference type="NCBI Taxonomy" id="1935"/>
    <lineage>
        <taxon>Bacteria</taxon>
        <taxon>Bacillati</taxon>
        <taxon>Actinomycetota</taxon>
        <taxon>Actinomycetes</taxon>
        <taxon>Kitasatosporales</taxon>
        <taxon>Streptomycetaceae</taxon>
        <taxon>Streptomyces</taxon>
        <taxon>Streptomyces violaceoruber group</taxon>
    </lineage>
</organism>
<accession>P0A465</accession>
<accession>P48954</accession>
<gene>
    <name evidence="1" type="primary">rplK</name>
</gene>
<keyword id="KW-0488">Methylation</keyword>
<keyword id="KW-0687">Ribonucleoprotein</keyword>
<keyword id="KW-0689">Ribosomal protein</keyword>
<keyword id="KW-0694">RNA-binding</keyword>
<keyword id="KW-0699">rRNA-binding</keyword>
<evidence type="ECO:0000255" key="1">
    <source>
        <dbReference type="HAMAP-Rule" id="MF_00736"/>
    </source>
</evidence>
<evidence type="ECO:0000305" key="2"/>
<sequence>MPPKKKKVTGLIKLQIQAGAANPAPPVGPALGQHGVNIMEFCKAYNAATESQRGWVIPVEITVYEDRSFTFITKTPPAAKMILKAAGVEKGSGEPHKTKVAKITRDQVREIATTKMPDLNANDLDQAEKIIAGTARSMGVTVEG</sequence>
<comment type="function">
    <text evidence="1">Forms part of the ribosomal stalk which helps the ribosome interact with GTP-bound translation factors.</text>
</comment>
<comment type="subunit">
    <text evidence="1">Part of the ribosomal stalk of the 50S ribosomal subunit. Interacts with L10 and the large rRNA to form the base of the stalk. L10 forms an elongated spine to which L12 dimers bind in a sequential fashion forming a multimeric L10(L12)X complex.</text>
</comment>
<comment type="PTM">
    <text evidence="1">One or more lysine residues are methylated.</text>
</comment>
<comment type="similarity">
    <text evidence="1">Belongs to the universal ribosomal protein uL11 family.</text>
</comment>
<reference key="1">
    <citation type="journal article" date="1998" name="Int. J. Syst. Bacteriol.">
        <title>Comparative ribosomal protein (L11 and L30) sequence analyses of several Streptomyces spp. commonly used in genetic studies.</title>
        <authorList>
            <person name="Kawamoto S."/>
            <person name="Ochi K."/>
        </authorList>
    </citation>
    <scope>NUCLEOTIDE SEQUENCE [GENOMIC DNA]</scope>
    <source>
        <strain>ATCC 14980 / DSM 40049 / JCM 4423 / KCTC 9787 / NBRC 12826 / NRRL B-12594 / VKM Ac-726</strain>
    </source>
</reference>